<gene>
    <name type="primary">OR52A5</name>
</gene>
<organism>
    <name type="scientific">Homo sapiens</name>
    <name type="common">Human</name>
    <dbReference type="NCBI Taxonomy" id="9606"/>
    <lineage>
        <taxon>Eukaryota</taxon>
        <taxon>Metazoa</taxon>
        <taxon>Chordata</taxon>
        <taxon>Craniata</taxon>
        <taxon>Vertebrata</taxon>
        <taxon>Euteleostomi</taxon>
        <taxon>Mammalia</taxon>
        <taxon>Eutheria</taxon>
        <taxon>Euarchontoglires</taxon>
        <taxon>Primates</taxon>
        <taxon>Haplorrhini</taxon>
        <taxon>Catarrhini</taxon>
        <taxon>Hominidae</taxon>
        <taxon>Homo</taxon>
    </lineage>
</organism>
<sequence length="316" mass="35955">MPTFNGSVFMPSAFILIGIPGLESVQCWIGIPFSAMYLIGVIGNSLILVIIKYENSLHIPMYIFLAMLAATDIALNTCILPKMLGIFWFHLPEISFDACLFQMWLIHSFQAIESGILLAMALDRYVAICIPLRHATIFSQQFLTHIGLGVTLRAAILIIPSLGLIKCCLKHYRTTVISHSYCEHMAIVKLATEDIRVNKIYGLFVAFAILGFDIIFITLSYVQIFITVFQLPQKEARFKAFNTCIAHICVFLQFYLLAFFSFFTHRFGSHIPPYIHILLSNLYLLVPPFLNPIVYGVKTKQIRDHIVKVFFFKKVT</sequence>
<proteinExistence type="inferred from homology"/>
<evidence type="ECO:0000255" key="1"/>
<evidence type="ECO:0000255" key="2">
    <source>
        <dbReference type="PROSITE-ProRule" id="PRU00521"/>
    </source>
</evidence>
<evidence type="ECO:0000305" key="3"/>
<feature type="chain" id="PRO_0000150766" description="Olfactory receptor 52A5">
    <location>
        <begin position="1"/>
        <end position="316"/>
    </location>
</feature>
<feature type="topological domain" description="Extracellular" evidence="1">
    <location>
        <begin position="1"/>
        <end position="27"/>
    </location>
</feature>
<feature type="transmembrane region" description="Helical; Name=1" evidence="1">
    <location>
        <begin position="28"/>
        <end position="48"/>
    </location>
</feature>
<feature type="topological domain" description="Cytoplasmic" evidence="1">
    <location>
        <begin position="49"/>
        <end position="56"/>
    </location>
</feature>
<feature type="transmembrane region" description="Helical; Name=2" evidence="1">
    <location>
        <begin position="57"/>
        <end position="77"/>
    </location>
</feature>
<feature type="topological domain" description="Extracellular" evidence="1">
    <location>
        <begin position="78"/>
        <end position="101"/>
    </location>
</feature>
<feature type="transmembrane region" description="Helical; Name=3" evidence="1">
    <location>
        <begin position="102"/>
        <end position="122"/>
    </location>
</feature>
<feature type="topological domain" description="Cytoplasmic" evidence="1">
    <location>
        <begin position="123"/>
        <end position="141"/>
    </location>
</feature>
<feature type="transmembrane region" description="Helical; Name=4" evidence="1">
    <location>
        <begin position="142"/>
        <end position="162"/>
    </location>
</feature>
<feature type="topological domain" description="Extracellular" evidence="1">
    <location>
        <begin position="163"/>
        <end position="199"/>
    </location>
</feature>
<feature type="transmembrane region" description="Helical; Name=5" evidence="1">
    <location>
        <begin position="200"/>
        <end position="220"/>
    </location>
</feature>
<feature type="topological domain" description="Cytoplasmic" evidence="1">
    <location>
        <begin position="221"/>
        <end position="240"/>
    </location>
</feature>
<feature type="transmembrane region" description="Helical; Name=6" evidence="1">
    <location>
        <begin position="241"/>
        <end position="261"/>
    </location>
</feature>
<feature type="topological domain" description="Extracellular" evidence="1">
    <location>
        <begin position="262"/>
        <end position="276"/>
    </location>
</feature>
<feature type="transmembrane region" description="Helical; Name=7" evidence="1">
    <location>
        <begin position="277"/>
        <end position="297"/>
    </location>
</feature>
<feature type="topological domain" description="Cytoplasmic" evidence="1">
    <location>
        <begin position="298"/>
        <end position="316"/>
    </location>
</feature>
<feature type="glycosylation site" description="N-linked (GlcNAc...) asparagine" evidence="1">
    <location>
        <position position="5"/>
    </location>
</feature>
<protein>
    <recommendedName>
        <fullName>Olfactory receptor 52A5</fullName>
    </recommendedName>
    <alternativeName>
        <fullName>Odorant receptor HOR3'beta5</fullName>
    </alternativeName>
    <alternativeName>
        <fullName>Olfactory receptor OR11-33</fullName>
    </alternativeName>
</protein>
<keyword id="KW-1003">Cell membrane</keyword>
<keyword id="KW-0297">G-protein coupled receptor</keyword>
<keyword id="KW-0325">Glycoprotein</keyword>
<keyword id="KW-0472">Membrane</keyword>
<keyword id="KW-0552">Olfaction</keyword>
<keyword id="KW-0675">Receptor</keyword>
<keyword id="KW-1185">Reference proteome</keyword>
<keyword id="KW-0716">Sensory transduction</keyword>
<keyword id="KW-0807">Transducer</keyword>
<keyword id="KW-0812">Transmembrane</keyword>
<keyword id="KW-1133">Transmembrane helix</keyword>
<accession>Q9H2C5</accession>
<name>O52A5_HUMAN</name>
<comment type="function">
    <text evidence="3">Odorant receptor.</text>
</comment>
<comment type="subcellular location">
    <subcellularLocation>
        <location>Cell membrane</location>
        <topology>Multi-pass membrane protein</topology>
    </subcellularLocation>
</comment>
<comment type="similarity">
    <text evidence="2">Belongs to the G-protein coupled receptor 1 family.</text>
</comment>
<comment type="online information" name="Human Olfactory Receptor Data Exploratorium (HORDE)">
    <link uri="http://genome.weizmann.ac.il/horde/card/index/symbol:OR52A5"/>
</comment>
<dbReference type="EMBL" id="AF289204">
    <property type="protein sequence ID" value="AAG42368.1"/>
    <property type="molecule type" value="Genomic_DNA"/>
</dbReference>
<dbReference type="EMBL" id="BK004433">
    <property type="protein sequence ID" value="DAA04831.1"/>
    <property type="molecule type" value="Genomic_DNA"/>
</dbReference>
<dbReference type="CCDS" id="CCDS31373.1"/>
<dbReference type="RefSeq" id="NP_001005160.1">
    <property type="nucleotide sequence ID" value="NM_001005160.3"/>
</dbReference>
<dbReference type="SMR" id="Q9H2C5"/>
<dbReference type="FunCoup" id="Q9H2C5">
    <property type="interactions" value="456"/>
</dbReference>
<dbReference type="STRING" id="9606.ENSP00000493298"/>
<dbReference type="GlyCosmos" id="Q9H2C5">
    <property type="glycosylation" value="1 site, No reported glycans"/>
</dbReference>
<dbReference type="GlyGen" id="Q9H2C5">
    <property type="glycosylation" value="1 site"/>
</dbReference>
<dbReference type="BioMuta" id="OR52A5"/>
<dbReference type="DMDM" id="74762730"/>
<dbReference type="PaxDb" id="9606-ENSP00000303469"/>
<dbReference type="ProteomicsDB" id="80528"/>
<dbReference type="Antibodypedia" id="23571">
    <property type="antibodies" value="114 antibodies from 19 providers"/>
</dbReference>
<dbReference type="DNASU" id="390054"/>
<dbReference type="Ensembl" id="ENST00000307388.2">
    <property type="protein sequence ID" value="ENSP00000303469.1"/>
    <property type="gene ID" value="ENSG00000171944.2"/>
</dbReference>
<dbReference type="Ensembl" id="ENST00000642125.1">
    <property type="protein sequence ID" value="ENSP00000493298.1"/>
    <property type="gene ID" value="ENSG00000171944.2"/>
</dbReference>
<dbReference type="GeneID" id="390054"/>
<dbReference type="KEGG" id="hsa:390054"/>
<dbReference type="MANE-Select" id="ENST00000307388.2">
    <property type="protein sequence ID" value="ENSP00000303469.1"/>
    <property type="RefSeq nucleotide sequence ID" value="NM_001005160.3"/>
    <property type="RefSeq protein sequence ID" value="NP_001005160.1"/>
</dbReference>
<dbReference type="UCSC" id="uc010qyx.2">
    <property type="organism name" value="human"/>
</dbReference>
<dbReference type="AGR" id="HGNC:19580"/>
<dbReference type="CTD" id="390054"/>
<dbReference type="GeneCards" id="OR52A5"/>
<dbReference type="HGNC" id="HGNC:19580">
    <property type="gene designation" value="OR52A5"/>
</dbReference>
<dbReference type="HPA" id="ENSG00000171944">
    <property type="expression patterns" value="Not detected"/>
</dbReference>
<dbReference type="neXtProt" id="NX_Q9H2C5"/>
<dbReference type="PharmGKB" id="PA134991603"/>
<dbReference type="VEuPathDB" id="HostDB:ENSG00000171944"/>
<dbReference type="eggNOG" id="ENOG502SITM">
    <property type="taxonomic scope" value="Eukaryota"/>
</dbReference>
<dbReference type="GeneTree" id="ENSGT01130000278289"/>
<dbReference type="HOGENOM" id="CLU_012526_0_0_1"/>
<dbReference type="InParanoid" id="Q9H2C5"/>
<dbReference type="OMA" id="HMPQISF"/>
<dbReference type="OrthoDB" id="5969463at2759"/>
<dbReference type="PAN-GO" id="Q9H2C5">
    <property type="GO annotations" value="0 GO annotations based on evolutionary models"/>
</dbReference>
<dbReference type="PhylomeDB" id="Q9H2C5"/>
<dbReference type="TreeFam" id="TF352744"/>
<dbReference type="PathwayCommons" id="Q9H2C5"/>
<dbReference type="Reactome" id="R-HSA-9752946">
    <property type="pathway name" value="Expression and translocation of olfactory receptors"/>
</dbReference>
<dbReference type="SignaLink" id="Q9H2C5"/>
<dbReference type="BioGRID-ORCS" id="390054">
    <property type="hits" value="7 hits in 748 CRISPR screens"/>
</dbReference>
<dbReference type="GeneWiki" id="OR52A5"/>
<dbReference type="GenomeRNAi" id="390054"/>
<dbReference type="Pharos" id="Q9H2C5">
    <property type="development level" value="Tdark"/>
</dbReference>
<dbReference type="PRO" id="PR:Q9H2C5"/>
<dbReference type="Proteomes" id="UP000005640">
    <property type="component" value="Chromosome 11"/>
</dbReference>
<dbReference type="RNAct" id="Q9H2C5">
    <property type="molecule type" value="protein"/>
</dbReference>
<dbReference type="Bgee" id="ENSG00000171944">
    <property type="expression patterns" value="Expressed in male germ line stem cell (sensu Vertebrata) in testis"/>
</dbReference>
<dbReference type="ExpressionAtlas" id="Q9H2C5">
    <property type="expression patterns" value="baseline and differential"/>
</dbReference>
<dbReference type="GO" id="GO:0016020">
    <property type="term" value="C:membrane"/>
    <property type="evidence" value="ECO:0000303"/>
    <property type="project" value="UniProtKB"/>
</dbReference>
<dbReference type="GO" id="GO:0005886">
    <property type="term" value="C:plasma membrane"/>
    <property type="evidence" value="ECO:0000318"/>
    <property type="project" value="GO_Central"/>
</dbReference>
<dbReference type="GO" id="GO:0004930">
    <property type="term" value="F:G protein-coupled receptor activity"/>
    <property type="evidence" value="ECO:0007669"/>
    <property type="project" value="UniProtKB-KW"/>
</dbReference>
<dbReference type="GO" id="GO:0004984">
    <property type="term" value="F:olfactory receptor activity"/>
    <property type="evidence" value="ECO:0000318"/>
    <property type="project" value="GO_Central"/>
</dbReference>
<dbReference type="GO" id="GO:0007608">
    <property type="term" value="P:sensory perception of smell"/>
    <property type="evidence" value="ECO:0000303"/>
    <property type="project" value="UniProtKB"/>
</dbReference>
<dbReference type="CDD" id="cd15955">
    <property type="entry name" value="7tmA_OR52A-like"/>
    <property type="match status" value="1"/>
</dbReference>
<dbReference type="FunFam" id="1.20.1070.10:FF:000006">
    <property type="entry name" value="Olfactory receptor"/>
    <property type="match status" value="1"/>
</dbReference>
<dbReference type="Gene3D" id="1.20.1070.10">
    <property type="entry name" value="Rhodopsin 7-helix transmembrane proteins"/>
    <property type="match status" value="1"/>
</dbReference>
<dbReference type="InterPro" id="IPR000276">
    <property type="entry name" value="GPCR_Rhodpsn"/>
</dbReference>
<dbReference type="InterPro" id="IPR017452">
    <property type="entry name" value="GPCR_Rhodpsn_7TM"/>
</dbReference>
<dbReference type="InterPro" id="IPR000725">
    <property type="entry name" value="Olfact_rcpt"/>
</dbReference>
<dbReference type="InterPro" id="IPR050402">
    <property type="entry name" value="OR51/52/56-like"/>
</dbReference>
<dbReference type="PANTHER" id="PTHR26450:SF48">
    <property type="entry name" value="OLFACTORY RECEPTOR 52A5"/>
    <property type="match status" value="1"/>
</dbReference>
<dbReference type="PANTHER" id="PTHR26450">
    <property type="entry name" value="OLFACTORY RECEPTOR 56B1-RELATED"/>
    <property type="match status" value="1"/>
</dbReference>
<dbReference type="Pfam" id="PF13853">
    <property type="entry name" value="7tm_4"/>
    <property type="match status" value="1"/>
</dbReference>
<dbReference type="PRINTS" id="PR00237">
    <property type="entry name" value="GPCRRHODOPSN"/>
</dbReference>
<dbReference type="PRINTS" id="PR00245">
    <property type="entry name" value="OLFACTORYR"/>
</dbReference>
<dbReference type="SMART" id="SM01381">
    <property type="entry name" value="7TM_GPCR_Srsx"/>
    <property type="match status" value="1"/>
</dbReference>
<dbReference type="SUPFAM" id="SSF81321">
    <property type="entry name" value="Family A G protein-coupled receptor-like"/>
    <property type="match status" value="1"/>
</dbReference>
<dbReference type="PROSITE" id="PS00237">
    <property type="entry name" value="G_PROTEIN_RECEP_F1_1"/>
    <property type="match status" value="1"/>
</dbReference>
<dbReference type="PROSITE" id="PS50262">
    <property type="entry name" value="G_PROTEIN_RECEP_F1_2"/>
    <property type="match status" value="1"/>
</dbReference>
<reference key="1">
    <citation type="journal article" date="2000" name="Proc. Natl. Acad. Sci. U.S.A.">
        <title>Comparative structural and functional analysis of the olfactory receptor genes flanking the human and mouse beta-globin gene clusters.</title>
        <authorList>
            <person name="Bulger M."/>
            <person name="Bender M.A."/>
            <person name="van Doorninck J.H."/>
            <person name="Wertman B."/>
            <person name="Farrell C.M."/>
            <person name="Felsenfeld G."/>
            <person name="Groudine M."/>
            <person name="Hardison R."/>
        </authorList>
    </citation>
    <scope>NUCLEOTIDE SEQUENCE [GENOMIC DNA]</scope>
</reference>
<reference key="2">
    <citation type="journal article" date="2004" name="Proc. Natl. Acad. Sci. U.S.A.">
        <title>The human olfactory receptor gene family.</title>
        <authorList>
            <person name="Malnic B."/>
            <person name="Godfrey P.A."/>
            <person name="Buck L.B."/>
        </authorList>
    </citation>
    <scope>IDENTIFICATION</scope>
</reference>
<reference key="3">
    <citation type="journal article" date="2004" name="Proc. Natl. Acad. Sci. U.S.A.">
        <authorList>
            <person name="Malnic B."/>
            <person name="Godfrey P.A."/>
            <person name="Buck L.B."/>
        </authorList>
    </citation>
    <scope>ERRATUM OF PUBMED:14983052</scope>
</reference>